<name>TA2R8_PAPHA</name>
<comment type="function">
    <text evidence="1">Receptor that may play a role in the perception of bitterness and is gustducin-linked. May play a role in sensing the chemical composition of the gastrointestinal content. The activity of this receptor may stimulate alpha gustducin, mediate PLC-beta-2 activation and lead to the gating of TRPM5 (By similarity).</text>
</comment>
<comment type="subcellular location">
    <subcellularLocation>
        <location>Membrane</location>
        <topology>Multi-pass membrane protein</topology>
    </subcellularLocation>
</comment>
<comment type="miscellaneous">
    <text>Most taste cells may be activated by a limited number of bitter compounds; individual taste cells can discriminate among bitter stimuli.</text>
</comment>
<comment type="similarity">
    <text evidence="3">Belongs to the G-protein coupled receptor T2R family.</text>
</comment>
<evidence type="ECO:0000250" key="1"/>
<evidence type="ECO:0000255" key="2"/>
<evidence type="ECO:0000305" key="3"/>
<organism>
    <name type="scientific">Papio hamadryas</name>
    <name type="common">Hamadryas baboon</name>
    <dbReference type="NCBI Taxonomy" id="9557"/>
    <lineage>
        <taxon>Eukaryota</taxon>
        <taxon>Metazoa</taxon>
        <taxon>Chordata</taxon>
        <taxon>Craniata</taxon>
        <taxon>Vertebrata</taxon>
        <taxon>Euteleostomi</taxon>
        <taxon>Mammalia</taxon>
        <taxon>Eutheria</taxon>
        <taxon>Euarchontoglires</taxon>
        <taxon>Primates</taxon>
        <taxon>Haplorrhini</taxon>
        <taxon>Catarrhini</taxon>
        <taxon>Cercopithecidae</taxon>
        <taxon>Cercopithecinae</taxon>
        <taxon>Papio</taxon>
    </lineage>
</organism>
<protein>
    <recommendedName>
        <fullName>Taste receptor type 2 member 8</fullName>
        <shortName>T2R8</shortName>
    </recommendedName>
</protein>
<keyword id="KW-0297">G-protein coupled receptor</keyword>
<keyword id="KW-0325">Glycoprotein</keyword>
<keyword id="KW-0472">Membrane</keyword>
<keyword id="KW-0675">Receptor</keyword>
<keyword id="KW-0716">Sensory transduction</keyword>
<keyword id="KW-0919">Taste</keyword>
<keyword id="KW-0807">Transducer</keyword>
<keyword id="KW-0812">Transmembrane</keyword>
<keyword id="KW-1133">Transmembrane helix</keyword>
<accession>Q646G4</accession>
<sequence>MFSPADNIFIILITGEFIIGILGNGYIGLVNWIDWIKKKKISTIDCILTNLVISRICLISVMVVNGIVIVLYPDVYTKTKLQIVICTFWTFANYLNMWFTACLNVFYSLKVANSSHPLFLWLKRKIDMVVRWILLGCFAISLLVSLIIATVLSHDYRFHAIAKHKRNVTEMFHVSKMPYFEPLTLFNLLAIVPFIVSLMSFFLLVRSLWRHTKQIKLYATGGRDPSTEAHVRAIKTMTLLIFFFFLYYITSLLVXFSYLITNYKLAMAFGEIVAILYPSGHSLILIILNNKLRQASVRMLTCRKIACVT</sequence>
<dbReference type="EMBL" id="AY724817">
    <property type="protein sequence ID" value="AAU21055.1"/>
    <property type="molecule type" value="Genomic_DNA"/>
</dbReference>
<dbReference type="GlyCosmos" id="Q646G4">
    <property type="glycosylation" value="1 site, No reported glycans"/>
</dbReference>
<dbReference type="GO" id="GO:0005886">
    <property type="term" value="C:plasma membrane"/>
    <property type="evidence" value="ECO:0007669"/>
    <property type="project" value="UniProtKB-ARBA"/>
</dbReference>
<dbReference type="GO" id="GO:0033038">
    <property type="term" value="F:bitter taste receptor activity"/>
    <property type="evidence" value="ECO:0007669"/>
    <property type="project" value="InterPro"/>
</dbReference>
<dbReference type="GO" id="GO:0004930">
    <property type="term" value="F:G protein-coupled receptor activity"/>
    <property type="evidence" value="ECO:0007669"/>
    <property type="project" value="UniProtKB-KW"/>
</dbReference>
<dbReference type="CDD" id="cd15022">
    <property type="entry name" value="7tm_TAS2R8"/>
    <property type="match status" value="1"/>
</dbReference>
<dbReference type="FunFam" id="1.20.1070.10:FF:000042">
    <property type="entry name" value="Taste receptor type 2 member 7"/>
    <property type="match status" value="1"/>
</dbReference>
<dbReference type="Gene3D" id="1.20.1070.10">
    <property type="entry name" value="Rhodopsin 7-helix transmembrane proteins"/>
    <property type="match status" value="1"/>
</dbReference>
<dbReference type="InterPro" id="IPR007960">
    <property type="entry name" value="TAS2R"/>
</dbReference>
<dbReference type="PANTHER" id="PTHR11394">
    <property type="entry name" value="TASTE RECEPTOR TYPE 2"/>
    <property type="match status" value="1"/>
</dbReference>
<dbReference type="PANTHER" id="PTHR11394:SF31">
    <property type="entry name" value="TASTE RECEPTOR TYPE 2 MEMBER 8"/>
    <property type="match status" value="1"/>
</dbReference>
<dbReference type="Pfam" id="PF05296">
    <property type="entry name" value="TAS2R"/>
    <property type="match status" value="1"/>
</dbReference>
<dbReference type="SUPFAM" id="SSF81321">
    <property type="entry name" value="Family A G protein-coupled receptor-like"/>
    <property type="match status" value="1"/>
</dbReference>
<reference key="1">
    <citation type="journal article" date="2005" name="Mol. Biol. Evol.">
        <title>Evolution of bitter taste receptors in humans and apes.</title>
        <authorList>
            <person name="Fischer A."/>
            <person name="Gilad Y."/>
            <person name="Man O."/>
            <person name="Paeaebo S."/>
        </authorList>
    </citation>
    <scope>NUCLEOTIDE SEQUENCE [GENOMIC DNA]</scope>
</reference>
<feature type="chain" id="PRO_0000082230" description="Taste receptor type 2 member 8">
    <location>
        <begin position="1"/>
        <end position="309"/>
    </location>
</feature>
<feature type="topological domain" description="Extracellular" evidence="2">
    <location>
        <begin position="1"/>
        <end position="7"/>
    </location>
</feature>
<feature type="transmembrane region" description="Helical; Name=1" evidence="2">
    <location>
        <begin position="8"/>
        <end position="28"/>
    </location>
</feature>
<feature type="topological domain" description="Cytoplasmic" evidence="2">
    <location>
        <begin position="29"/>
        <end position="50"/>
    </location>
</feature>
<feature type="transmembrane region" description="Helical; Name=2" evidence="2">
    <location>
        <begin position="51"/>
        <end position="71"/>
    </location>
</feature>
<feature type="topological domain" description="Extracellular" evidence="2">
    <location>
        <begin position="72"/>
        <end position="82"/>
    </location>
</feature>
<feature type="transmembrane region" description="Helical; Name=3" evidence="2">
    <location>
        <begin position="83"/>
        <end position="103"/>
    </location>
</feature>
<feature type="topological domain" description="Cytoplasmic" evidence="2">
    <location>
        <begin position="104"/>
        <end position="131"/>
    </location>
</feature>
<feature type="transmembrane region" description="Helical; Name=4" evidence="2">
    <location>
        <begin position="132"/>
        <end position="152"/>
    </location>
</feature>
<feature type="topological domain" description="Extracellular" evidence="2">
    <location>
        <begin position="153"/>
        <end position="184"/>
    </location>
</feature>
<feature type="transmembrane region" description="Helical; Name=5" evidence="2">
    <location>
        <begin position="185"/>
        <end position="205"/>
    </location>
</feature>
<feature type="topological domain" description="Cytoplasmic" evidence="2">
    <location>
        <begin position="206"/>
        <end position="239"/>
    </location>
</feature>
<feature type="transmembrane region" description="Helical; Name=6" evidence="2">
    <location>
        <begin position="240"/>
        <end position="260"/>
    </location>
</feature>
<feature type="topological domain" description="Extracellular" evidence="2">
    <location>
        <begin position="261"/>
        <end position="266"/>
    </location>
</feature>
<feature type="transmembrane region" description="Helical; Name=7" evidence="2">
    <location>
        <begin position="267"/>
        <end position="287"/>
    </location>
</feature>
<feature type="topological domain" description="Cytoplasmic" evidence="2">
    <location>
        <begin position="288"/>
        <end position="309"/>
    </location>
</feature>
<feature type="glycosylation site" description="N-linked (GlcNAc...) asparagine" evidence="2">
    <location>
        <position position="167"/>
    </location>
</feature>
<gene>
    <name type="primary">TAS2R8</name>
</gene>
<proteinExistence type="inferred from homology"/>